<gene>
    <name evidence="1" type="primary">mraY</name>
    <name type="ordered locus">SBO_0075</name>
</gene>
<organism>
    <name type="scientific">Shigella boydii serotype 4 (strain Sb227)</name>
    <dbReference type="NCBI Taxonomy" id="300268"/>
    <lineage>
        <taxon>Bacteria</taxon>
        <taxon>Pseudomonadati</taxon>
        <taxon>Pseudomonadota</taxon>
        <taxon>Gammaproteobacteria</taxon>
        <taxon>Enterobacterales</taxon>
        <taxon>Enterobacteriaceae</taxon>
        <taxon>Shigella</taxon>
    </lineage>
</organism>
<keyword id="KW-0131">Cell cycle</keyword>
<keyword id="KW-0132">Cell division</keyword>
<keyword id="KW-0997">Cell inner membrane</keyword>
<keyword id="KW-1003">Cell membrane</keyword>
<keyword id="KW-0133">Cell shape</keyword>
<keyword id="KW-0961">Cell wall biogenesis/degradation</keyword>
<keyword id="KW-0460">Magnesium</keyword>
<keyword id="KW-0472">Membrane</keyword>
<keyword id="KW-0479">Metal-binding</keyword>
<keyword id="KW-0573">Peptidoglycan synthesis</keyword>
<keyword id="KW-0808">Transferase</keyword>
<keyword id="KW-0812">Transmembrane</keyword>
<keyword id="KW-1133">Transmembrane helix</keyword>
<sequence length="360" mass="39875">MLVWLAEHLVKYYSGFNVFSYLTFRAIVSLLTALFISLWMGPRMIAHLQKLSFGQVVRNDGPESHFSKRGTPTMGGIMILTAIVISVLLWAYPSNPYVWCVLVVLVGYGVIGFVDDYRKVVRKDTKGLIARWKYFWMSVIALGVAFALYLAGKDTPATQLVVPFFKDVMPQLGLFYILLAYFVIVGTGNAVNLTDGLDGLAIMPTVFVAGGFALVAWATGNMNFASYLHIPYLRHAGELVIVCTAIVGAGLGFLWFNTYPAQVFMGDVGSLALGGALGIIAVLLRQEFLLVIMGGVFVVETLSVILQVGSFKLRGQRIFRMAPIHHHYELKGWPEPRVIVRFWIISLMLVLIGLATLKVR</sequence>
<proteinExistence type="inferred from homology"/>
<name>MRAY_SHIBS</name>
<protein>
    <recommendedName>
        <fullName evidence="1">Phospho-N-acetylmuramoyl-pentapeptide-transferase</fullName>
        <ecNumber evidence="1">2.7.8.13</ecNumber>
    </recommendedName>
    <alternativeName>
        <fullName evidence="1">UDP-MurNAc-pentapeptide phosphotransferase</fullName>
    </alternativeName>
</protein>
<reference key="1">
    <citation type="journal article" date="2005" name="Nucleic Acids Res.">
        <title>Genome dynamics and diversity of Shigella species, the etiologic agents of bacillary dysentery.</title>
        <authorList>
            <person name="Yang F."/>
            <person name="Yang J."/>
            <person name="Zhang X."/>
            <person name="Chen L."/>
            <person name="Jiang Y."/>
            <person name="Yan Y."/>
            <person name="Tang X."/>
            <person name="Wang J."/>
            <person name="Xiong Z."/>
            <person name="Dong J."/>
            <person name="Xue Y."/>
            <person name="Zhu Y."/>
            <person name="Xu X."/>
            <person name="Sun L."/>
            <person name="Chen S."/>
            <person name="Nie H."/>
            <person name="Peng J."/>
            <person name="Xu J."/>
            <person name="Wang Y."/>
            <person name="Yuan Z."/>
            <person name="Wen Y."/>
            <person name="Yao Z."/>
            <person name="Shen Y."/>
            <person name="Qiang B."/>
            <person name="Hou Y."/>
            <person name="Yu J."/>
            <person name="Jin Q."/>
        </authorList>
    </citation>
    <scope>NUCLEOTIDE SEQUENCE [LARGE SCALE GENOMIC DNA]</scope>
    <source>
        <strain>Sb227</strain>
    </source>
</reference>
<dbReference type="EC" id="2.7.8.13" evidence="1"/>
<dbReference type="EMBL" id="CP000036">
    <property type="protein sequence ID" value="ABB64810.1"/>
    <property type="molecule type" value="Genomic_DNA"/>
</dbReference>
<dbReference type="RefSeq" id="WP_000964131.1">
    <property type="nucleotide sequence ID" value="NC_007613.1"/>
</dbReference>
<dbReference type="SMR" id="Q326E8"/>
<dbReference type="GeneID" id="93777347"/>
<dbReference type="KEGG" id="sbo:SBO_0075"/>
<dbReference type="HOGENOM" id="CLU_023982_0_0_6"/>
<dbReference type="UniPathway" id="UPA00219"/>
<dbReference type="Proteomes" id="UP000007067">
    <property type="component" value="Chromosome"/>
</dbReference>
<dbReference type="GO" id="GO:0005886">
    <property type="term" value="C:plasma membrane"/>
    <property type="evidence" value="ECO:0007669"/>
    <property type="project" value="UniProtKB-SubCell"/>
</dbReference>
<dbReference type="GO" id="GO:0046872">
    <property type="term" value="F:metal ion binding"/>
    <property type="evidence" value="ECO:0007669"/>
    <property type="project" value="UniProtKB-KW"/>
</dbReference>
<dbReference type="GO" id="GO:0008963">
    <property type="term" value="F:phospho-N-acetylmuramoyl-pentapeptide-transferase activity"/>
    <property type="evidence" value="ECO:0007669"/>
    <property type="project" value="UniProtKB-UniRule"/>
</dbReference>
<dbReference type="GO" id="GO:0051992">
    <property type="term" value="F:UDP-N-acetylmuramoyl-L-alanyl-D-glutamyl-meso-2,6-diaminopimelyl-D-alanyl-D-alanine:undecaprenyl-phosphate transferase activity"/>
    <property type="evidence" value="ECO:0007669"/>
    <property type="project" value="RHEA"/>
</dbReference>
<dbReference type="GO" id="GO:0051301">
    <property type="term" value="P:cell division"/>
    <property type="evidence" value="ECO:0007669"/>
    <property type="project" value="UniProtKB-KW"/>
</dbReference>
<dbReference type="GO" id="GO:0071555">
    <property type="term" value="P:cell wall organization"/>
    <property type="evidence" value="ECO:0007669"/>
    <property type="project" value="UniProtKB-KW"/>
</dbReference>
<dbReference type="GO" id="GO:0009252">
    <property type="term" value="P:peptidoglycan biosynthetic process"/>
    <property type="evidence" value="ECO:0007669"/>
    <property type="project" value="UniProtKB-UniRule"/>
</dbReference>
<dbReference type="GO" id="GO:0008360">
    <property type="term" value="P:regulation of cell shape"/>
    <property type="evidence" value="ECO:0007669"/>
    <property type="project" value="UniProtKB-KW"/>
</dbReference>
<dbReference type="CDD" id="cd06852">
    <property type="entry name" value="GT_MraY"/>
    <property type="match status" value="1"/>
</dbReference>
<dbReference type="HAMAP" id="MF_00038">
    <property type="entry name" value="MraY"/>
    <property type="match status" value="1"/>
</dbReference>
<dbReference type="InterPro" id="IPR000715">
    <property type="entry name" value="Glycosyl_transferase_4"/>
</dbReference>
<dbReference type="InterPro" id="IPR003524">
    <property type="entry name" value="PNAcMuramoyl-5peptid_Trfase"/>
</dbReference>
<dbReference type="InterPro" id="IPR018480">
    <property type="entry name" value="PNAcMuramoyl-5peptid_Trfase_CS"/>
</dbReference>
<dbReference type="NCBIfam" id="TIGR00445">
    <property type="entry name" value="mraY"/>
    <property type="match status" value="1"/>
</dbReference>
<dbReference type="PANTHER" id="PTHR22926">
    <property type="entry name" value="PHOSPHO-N-ACETYLMURAMOYL-PENTAPEPTIDE-TRANSFERASE"/>
    <property type="match status" value="1"/>
</dbReference>
<dbReference type="PANTHER" id="PTHR22926:SF5">
    <property type="entry name" value="PHOSPHO-N-ACETYLMURAMOYL-PENTAPEPTIDE-TRANSFERASE HOMOLOG"/>
    <property type="match status" value="1"/>
</dbReference>
<dbReference type="Pfam" id="PF00953">
    <property type="entry name" value="Glycos_transf_4"/>
    <property type="match status" value="1"/>
</dbReference>
<dbReference type="Pfam" id="PF10555">
    <property type="entry name" value="MraY_sig1"/>
    <property type="match status" value="1"/>
</dbReference>
<dbReference type="PROSITE" id="PS01347">
    <property type="entry name" value="MRAY_1"/>
    <property type="match status" value="1"/>
</dbReference>
<dbReference type="PROSITE" id="PS01348">
    <property type="entry name" value="MRAY_2"/>
    <property type="match status" value="1"/>
</dbReference>
<accession>Q326E8</accession>
<comment type="function">
    <text evidence="1">Catalyzes the initial step of the lipid cycle reactions in the biosynthesis of the cell wall peptidoglycan: transfers peptidoglycan precursor phospho-MurNAc-pentapeptide from UDP-MurNAc-pentapeptide onto the lipid carrier undecaprenyl phosphate, yielding undecaprenyl-pyrophosphoryl-MurNAc-pentapeptide, known as lipid I.</text>
</comment>
<comment type="catalytic activity">
    <reaction evidence="1">
        <text>UDP-N-acetyl-alpha-D-muramoyl-L-alanyl-gamma-D-glutamyl-meso-2,6-diaminopimeloyl-D-alanyl-D-alanine + di-trans,octa-cis-undecaprenyl phosphate = di-trans,octa-cis-undecaprenyl diphospho-N-acetyl-alpha-D-muramoyl-L-alanyl-D-glutamyl-meso-2,6-diaminopimeloyl-D-alanyl-D-alanine + UMP</text>
        <dbReference type="Rhea" id="RHEA:28386"/>
        <dbReference type="ChEBI" id="CHEBI:57865"/>
        <dbReference type="ChEBI" id="CHEBI:60392"/>
        <dbReference type="ChEBI" id="CHEBI:61386"/>
        <dbReference type="ChEBI" id="CHEBI:61387"/>
        <dbReference type="EC" id="2.7.8.13"/>
    </reaction>
</comment>
<comment type="cofactor">
    <cofactor evidence="1">
        <name>Mg(2+)</name>
        <dbReference type="ChEBI" id="CHEBI:18420"/>
    </cofactor>
</comment>
<comment type="pathway">
    <text evidence="1">Cell wall biogenesis; peptidoglycan biosynthesis.</text>
</comment>
<comment type="subcellular location">
    <subcellularLocation>
        <location evidence="1">Cell inner membrane</location>
        <topology evidence="1">Multi-pass membrane protein</topology>
    </subcellularLocation>
</comment>
<comment type="similarity">
    <text evidence="1">Belongs to the glycosyltransferase 4 family. MraY subfamily.</text>
</comment>
<evidence type="ECO:0000255" key="1">
    <source>
        <dbReference type="HAMAP-Rule" id="MF_00038"/>
    </source>
</evidence>
<feature type="chain" id="PRO_0000235480" description="Phospho-N-acetylmuramoyl-pentapeptide-transferase">
    <location>
        <begin position="1"/>
        <end position="360"/>
    </location>
</feature>
<feature type="topological domain" description="Periplasmic" evidence="1">
    <location>
        <begin position="1"/>
        <end position="25"/>
    </location>
</feature>
<feature type="transmembrane region" description="Helical" evidence="1">
    <location>
        <begin position="26"/>
        <end position="46"/>
    </location>
</feature>
<feature type="topological domain" description="Cytoplasmic" evidence="1">
    <location>
        <begin position="47"/>
        <end position="71"/>
    </location>
</feature>
<feature type="transmembrane region" description="Helical" evidence="1">
    <location>
        <begin position="72"/>
        <end position="92"/>
    </location>
</feature>
<feature type="topological domain" description="Periplasmic" evidence="1">
    <location>
        <position position="93"/>
    </location>
</feature>
<feature type="transmembrane region" description="Helical" evidence="1">
    <location>
        <begin position="94"/>
        <end position="114"/>
    </location>
</feature>
<feature type="topological domain" description="Cytoplasmic" evidence="1">
    <location>
        <begin position="115"/>
        <end position="131"/>
    </location>
</feature>
<feature type="transmembrane region" description="Helical" evidence="1">
    <location>
        <begin position="132"/>
        <end position="152"/>
    </location>
</feature>
<feature type="topological domain" description="Periplasmic" evidence="1">
    <location>
        <begin position="153"/>
        <end position="167"/>
    </location>
</feature>
<feature type="transmembrane region" description="Helical" evidence="1">
    <location>
        <begin position="168"/>
        <end position="188"/>
    </location>
</feature>
<feature type="topological domain" description="Cytoplasmic" evidence="1">
    <location>
        <begin position="189"/>
        <end position="198"/>
    </location>
</feature>
<feature type="transmembrane region" description="Helical" evidence="1">
    <location>
        <begin position="199"/>
        <end position="219"/>
    </location>
</feature>
<feature type="topological domain" description="Periplasmic" evidence="1">
    <location>
        <begin position="220"/>
        <end position="235"/>
    </location>
</feature>
<feature type="transmembrane region" description="Helical" evidence="1">
    <location>
        <begin position="236"/>
        <end position="256"/>
    </location>
</feature>
<feature type="topological domain" description="Cytoplasmic" evidence="1">
    <location>
        <begin position="257"/>
        <end position="262"/>
    </location>
</feature>
<feature type="transmembrane region" description="Helical" evidence="1">
    <location>
        <begin position="263"/>
        <end position="283"/>
    </location>
</feature>
<feature type="topological domain" description="Periplasmic" evidence="1">
    <location>
        <begin position="284"/>
        <end position="287"/>
    </location>
</feature>
<feature type="transmembrane region" description="Helical" evidence="1">
    <location>
        <begin position="288"/>
        <end position="308"/>
    </location>
</feature>
<feature type="topological domain" description="Cytoplasmic" evidence="1">
    <location>
        <begin position="309"/>
        <end position="337"/>
    </location>
</feature>
<feature type="transmembrane region" description="Helical" evidence="1">
    <location>
        <begin position="338"/>
        <end position="358"/>
    </location>
</feature>
<feature type="topological domain" description="Periplasmic" evidence="1">
    <location>
        <begin position="359"/>
        <end position="360"/>
    </location>
</feature>